<gene>
    <name type="primary">dnaK</name>
</gene>
<feature type="initiator methionine" description="Removed" evidence="1">
    <location>
        <position position="1"/>
    </location>
</feature>
<feature type="chain" id="PRO_0000078422" description="Chaperone protein DnaK">
    <location>
        <begin position="2"/>
        <end position="607"/>
    </location>
</feature>
<feature type="region of interest" description="Disordered" evidence="2">
    <location>
        <begin position="571"/>
        <end position="607"/>
    </location>
</feature>
<feature type="compositionally biased region" description="Low complexity" evidence="2">
    <location>
        <begin position="571"/>
        <end position="586"/>
    </location>
</feature>
<feature type="compositionally biased region" description="Acidic residues" evidence="2">
    <location>
        <begin position="594"/>
        <end position="607"/>
    </location>
</feature>
<feature type="modified residue" description="Phosphothreonine; by autocatalysis" evidence="1">
    <location>
        <position position="169"/>
    </location>
</feature>
<proteinExistence type="inferred from homology"/>
<organism>
    <name type="scientific">Parageobacillus thermoglucosidasius</name>
    <name type="common">Geobacillus thermoglucosidasius</name>
    <dbReference type="NCBI Taxonomy" id="1426"/>
    <lineage>
        <taxon>Bacteria</taxon>
        <taxon>Bacillati</taxon>
        <taxon>Bacillota</taxon>
        <taxon>Bacilli</taxon>
        <taxon>Bacillales</taxon>
        <taxon>Anoxybacillaceae</taxon>
        <taxon>Parageobacillus</taxon>
    </lineage>
</organism>
<protein>
    <recommendedName>
        <fullName>Chaperone protein DnaK</fullName>
    </recommendedName>
    <alternativeName>
        <fullName>HSP70</fullName>
    </alternativeName>
    <alternativeName>
        <fullName>Heat shock 70 kDa protein</fullName>
    </alternativeName>
    <alternativeName>
        <fullName>Heat shock protein 70</fullName>
    </alternativeName>
</protein>
<accession>Q9KWS7</accession>
<comment type="function">
    <text evidence="1">Acts as a chaperone.</text>
</comment>
<comment type="induction">
    <text evidence="1">By stress conditions e.g. heat shock (By similarity).</text>
</comment>
<comment type="similarity">
    <text evidence="3">Belongs to the heat shock protein 70 family.</text>
</comment>
<evidence type="ECO:0000250" key="1"/>
<evidence type="ECO:0000256" key="2">
    <source>
        <dbReference type="SAM" id="MobiDB-lite"/>
    </source>
</evidence>
<evidence type="ECO:0000305" key="3"/>
<dbReference type="EMBL" id="AB017035">
    <property type="protein sequence ID" value="BAB03215.1"/>
    <property type="molecule type" value="Genomic_DNA"/>
</dbReference>
<dbReference type="SMR" id="Q9KWS7"/>
<dbReference type="STRING" id="1426.AOT13_16990"/>
<dbReference type="eggNOG" id="COG0443">
    <property type="taxonomic scope" value="Bacteria"/>
</dbReference>
<dbReference type="GO" id="GO:0005524">
    <property type="term" value="F:ATP binding"/>
    <property type="evidence" value="ECO:0007669"/>
    <property type="project" value="UniProtKB-UniRule"/>
</dbReference>
<dbReference type="GO" id="GO:0140662">
    <property type="term" value="F:ATP-dependent protein folding chaperone"/>
    <property type="evidence" value="ECO:0007669"/>
    <property type="project" value="InterPro"/>
</dbReference>
<dbReference type="GO" id="GO:0051082">
    <property type="term" value="F:unfolded protein binding"/>
    <property type="evidence" value="ECO:0007669"/>
    <property type="project" value="InterPro"/>
</dbReference>
<dbReference type="CDD" id="cd10234">
    <property type="entry name" value="ASKHA_NBD_HSP70_DnaK-like"/>
    <property type="match status" value="1"/>
</dbReference>
<dbReference type="FunFam" id="2.60.34.10:FF:000014">
    <property type="entry name" value="Chaperone protein DnaK HSP70"/>
    <property type="match status" value="1"/>
</dbReference>
<dbReference type="FunFam" id="3.30.420.40:FF:000020">
    <property type="entry name" value="Chaperone protein HscA homolog"/>
    <property type="match status" value="1"/>
</dbReference>
<dbReference type="FunFam" id="3.30.420.40:FF:000545">
    <property type="entry name" value="Endoplasmic reticulum chaperone BiP"/>
    <property type="match status" value="1"/>
</dbReference>
<dbReference type="FunFam" id="1.20.1270.10:FF:000004">
    <property type="entry name" value="Molecular chaperone DnaK"/>
    <property type="match status" value="1"/>
</dbReference>
<dbReference type="FunFam" id="3.90.640.10:FF:000003">
    <property type="entry name" value="Molecular chaperone DnaK"/>
    <property type="match status" value="1"/>
</dbReference>
<dbReference type="Gene3D" id="1.20.1270.10">
    <property type="match status" value="1"/>
</dbReference>
<dbReference type="Gene3D" id="3.30.420.40">
    <property type="match status" value="2"/>
</dbReference>
<dbReference type="Gene3D" id="3.90.640.10">
    <property type="entry name" value="Actin, Chain A, domain 4"/>
    <property type="match status" value="1"/>
</dbReference>
<dbReference type="Gene3D" id="2.60.34.10">
    <property type="entry name" value="Substrate Binding Domain Of DNAk, Chain A, domain 1"/>
    <property type="match status" value="1"/>
</dbReference>
<dbReference type="HAMAP" id="MF_00332">
    <property type="entry name" value="DnaK"/>
    <property type="match status" value="1"/>
</dbReference>
<dbReference type="InterPro" id="IPR043129">
    <property type="entry name" value="ATPase_NBD"/>
</dbReference>
<dbReference type="InterPro" id="IPR012725">
    <property type="entry name" value="Chaperone_DnaK"/>
</dbReference>
<dbReference type="InterPro" id="IPR018181">
    <property type="entry name" value="Heat_shock_70_CS"/>
</dbReference>
<dbReference type="InterPro" id="IPR029048">
    <property type="entry name" value="HSP70_C_sf"/>
</dbReference>
<dbReference type="InterPro" id="IPR029047">
    <property type="entry name" value="HSP70_peptide-bd_sf"/>
</dbReference>
<dbReference type="InterPro" id="IPR013126">
    <property type="entry name" value="Hsp_70_fam"/>
</dbReference>
<dbReference type="NCBIfam" id="NF001413">
    <property type="entry name" value="PRK00290.1"/>
    <property type="match status" value="1"/>
</dbReference>
<dbReference type="NCBIfam" id="TIGR02350">
    <property type="entry name" value="prok_dnaK"/>
    <property type="match status" value="1"/>
</dbReference>
<dbReference type="PANTHER" id="PTHR19375">
    <property type="entry name" value="HEAT SHOCK PROTEIN 70KDA"/>
    <property type="match status" value="1"/>
</dbReference>
<dbReference type="Pfam" id="PF00012">
    <property type="entry name" value="HSP70"/>
    <property type="match status" value="1"/>
</dbReference>
<dbReference type="PRINTS" id="PR00301">
    <property type="entry name" value="HEATSHOCK70"/>
</dbReference>
<dbReference type="SUPFAM" id="SSF53067">
    <property type="entry name" value="Actin-like ATPase domain"/>
    <property type="match status" value="2"/>
</dbReference>
<dbReference type="SUPFAM" id="SSF100934">
    <property type="entry name" value="Heat shock protein 70kD (HSP70), C-terminal subdomain"/>
    <property type="match status" value="1"/>
</dbReference>
<dbReference type="SUPFAM" id="SSF100920">
    <property type="entry name" value="Heat shock protein 70kD (HSP70), peptide-binding domain"/>
    <property type="match status" value="1"/>
</dbReference>
<dbReference type="PROSITE" id="PS00297">
    <property type="entry name" value="HSP70_1"/>
    <property type="match status" value="1"/>
</dbReference>
<dbReference type="PROSITE" id="PS00329">
    <property type="entry name" value="HSP70_2"/>
    <property type="match status" value="1"/>
</dbReference>
<dbReference type="PROSITE" id="PS01036">
    <property type="entry name" value="HSP70_3"/>
    <property type="match status" value="1"/>
</dbReference>
<keyword id="KW-0067">ATP-binding</keyword>
<keyword id="KW-0143">Chaperone</keyword>
<keyword id="KW-0547">Nucleotide-binding</keyword>
<keyword id="KW-0597">Phosphoprotein</keyword>
<keyword id="KW-0346">Stress response</keyword>
<name>DNAK_PARTM</name>
<sequence>MSKIIGIDLGTTNSCVAVLEGGEPKVIPNPEGSRTTPSVVAFKNGERLVAKRQAITNPNTIISIKRHMGTDYKVEIEGKKYTPQEISAIILQYLKSYAEDYLGEPVTRAVITVPAYFNDAQRQATKDAGRIAGLQVERIINEPTAAALAYGLDKEEDQTILVYDLGGGTFDVSILELGDGVFEVKATAGDNHLGGDDFDQVIIDYLVEQFKQEHGIDLSKDKMALQRLKDAAEKAKKELSGVTQTQISLPFISANETGPLHIETTLTRAKFEELSAHLVERTMGPVRQALQDAGLTPADIDKVILVGGSTRIPAVQEAIKRELGKEPHKGVNPDEVVAIGAAIQGGVIAGEVKDVVLLDVTPLSLGIETMGGVFTKLIERNTTIPTSKSQIFTTAADNQTTVDIHVLQGERPMAADNKTLGRFQLTDIPPAPRGVPQIEVTFDIDANGIVHVRAKDLGTNKEQSITIKSSSGLSEEEIQRMIKEAEENAEADRKRKEAAELRNEADHLVFTTEKTLKEVEGKVDEAEVKKAREAKDALKAALEKNDIDDIRKKKEALQEIVQQLSVKLYEQAAKQAQAQQQTGAGDAAKKDDNVVDAEFEEVKDDNK</sequence>
<reference key="1">
    <citation type="journal article" date="2000" name="Antonie Van Leeuwenhoek">
        <title>Features of dnaK operon genes of the obligate thermophile Bacillus thermoglucosidasius KP1006.</title>
        <authorList>
            <person name="Watanabe K."/>
            <person name="Iwashiro T."/>
            <person name="Suzuki Y."/>
        </authorList>
    </citation>
    <scope>NUCLEOTIDE SEQUENCE [GENOMIC DNA]</scope>
    <source>
        <strain>ATCC 43742 / DSM 2542 / NCIMB 11955 / NRRL B-14516 / KP 1006</strain>
    </source>
</reference>